<sequence length="408" mass="43668">MAENFVVVDGGVVAPKGFKANGHKDRKYGAALIYSETDAVAAGVFTTNKVFAHPVALSKDVLVNNSVFRAIVANSGNANCFTKGGMDDAKLLVKKAAELLNIPENQVLSASTGVIGRRMPMDIITTEVERAFENMSSENSNKNASAAIMTTDAFPKTIAVEFEVNGKSVRIGGIAKGAGMIAPNMLHATMLGFITTDIEISKEDLTNSLQKATDESFNNAVVDGDMSTNDTVYVLANAQSGVKYIDCKDKFDSALAYVSKELAKMIVSDGEGAKKLIEATVYGAETKEDAKKASMSIIRSLLLKTAVFGADPNWGRIAAAVGYSGAEMDMSNFDIIISDISLEKQAILVKSGEQIADCGTPELKLAEEIMKEDKIKIIVDLKMGSFENTAFGCDLGYDYVRINSEYTT</sequence>
<feature type="chain" id="PRO_1000065050" description="Glutamate N-acetyltransferase alpha chain" evidence="1">
    <location>
        <begin position="1"/>
        <end position="188"/>
    </location>
</feature>
<feature type="chain" id="PRO_1000065051" description="Glutamate N-acetyltransferase beta chain" evidence="1">
    <location>
        <begin position="189"/>
        <end position="408"/>
    </location>
</feature>
<feature type="active site" description="Nucleophile" evidence="1">
    <location>
        <position position="189"/>
    </location>
</feature>
<feature type="binding site" evidence="1">
    <location>
        <position position="150"/>
    </location>
    <ligand>
        <name>substrate</name>
    </ligand>
</feature>
<feature type="binding site" evidence="1">
    <location>
        <position position="176"/>
    </location>
    <ligand>
        <name>substrate</name>
    </ligand>
</feature>
<feature type="binding site" evidence="1">
    <location>
        <position position="189"/>
    </location>
    <ligand>
        <name>substrate</name>
    </ligand>
</feature>
<feature type="binding site" evidence="1">
    <location>
        <position position="271"/>
    </location>
    <ligand>
        <name>substrate</name>
    </ligand>
</feature>
<feature type="binding site" evidence="1">
    <location>
        <position position="403"/>
    </location>
    <ligand>
        <name>substrate</name>
    </ligand>
</feature>
<feature type="binding site" evidence="1">
    <location>
        <position position="408"/>
    </location>
    <ligand>
        <name>substrate</name>
    </ligand>
</feature>
<feature type="site" description="Involved in the stabilization of negative charge on the oxyanion by the formation of the oxyanion hole" evidence="1">
    <location>
        <position position="112"/>
    </location>
</feature>
<feature type="site" description="Involved in the stabilization of negative charge on the oxyanion by the formation of the oxyanion hole" evidence="1">
    <location>
        <position position="113"/>
    </location>
</feature>
<feature type="site" description="Cleavage; by autolysis" evidence="1">
    <location>
        <begin position="188"/>
        <end position="189"/>
    </location>
</feature>
<accession>A6VFI9</accession>
<comment type="function">
    <text evidence="1">Catalyzes the transfer of the acetyl group from N(2)-acetylornithine to glutamate, forming N-acetylglutamate and L-ornithine.</text>
</comment>
<comment type="catalytic activity">
    <reaction evidence="1">
        <text>N(2)-acetyl-L-ornithine + L-glutamate = N-acetyl-L-glutamate + L-ornithine</text>
        <dbReference type="Rhea" id="RHEA:15349"/>
        <dbReference type="ChEBI" id="CHEBI:29985"/>
        <dbReference type="ChEBI" id="CHEBI:44337"/>
        <dbReference type="ChEBI" id="CHEBI:46911"/>
        <dbReference type="ChEBI" id="CHEBI:57805"/>
        <dbReference type="EC" id="2.3.1.35"/>
    </reaction>
</comment>
<comment type="pathway">
    <text evidence="1">Amino-acid biosynthesis; L-arginine biosynthesis; L-ornithine and N-acetyl-L-glutamate from L-glutamate and N(2)-acetyl-L-ornithine (cyclic): step 1/1.</text>
</comment>
<comment type="subunit">
    <text evidence="1">Heterotetramer of two alpha and two beta chains.</text>
</comment>
<comment type="subcellular location">
    <subcellularLocation>
        <location evidence="1">Cytoplasm</location>
    </subcellularLocation>
</comment>
<comment type="similarity">
    <text evidence="1">Belongs to the ArgJ family.</text>
</comment>
<protein>
    <recommendedName>
        <fullName evidence="1">Glutamate N-acetyltransferase</fullName>
        <ecNumber evidence="1">2.3.1.35</ecNumber>
    </recommendedName>
    <alternativeName>
        <fullName evidence="1">Ornithine acetyltransferase</fullName>
        <shortName evidence="1">OATase</shortName>
    </alternativeName>
    <alternativeName>
        <fullName evidence="1">Ornithine transacetylase</fullName>
    </alternativeName>
    <component>
        <recommendedName>
            <fullName evidence="1">Glutamate N-acetyltransferase alpha chain</fullName>
        </recommendedName>
    </component>
    <component>
        <recommendedName>
            <fullName evidence="1">Glutamate N-acetyltransferase beta chain</fullName>
        </recommendedName>
    </component>
</protein>
<organism>
    <name type="scientific">Methanococcus maripaludis (strain C7 / ATCC BAA-1331)</name>
    <dbReference type="NCBI Taxonomy" id="426368"/>
    <lineage>
        <taxon>Archaea</taxon>
        <taxon>Methanobacteriati</taxon>
        <taxon>Methanobacteriota</taxon>
        <taxon>Methanomada group</taxon>
        <taxon>Methanococci</taxon>
        <taxon>Methanococcales</taxon>
        <taxon>Methanococcaceae</taxon>
        <taxon>Methanococcus</taxon>
    </lineage>
</organism>
<keyword id="KW-0012">Acyltransferase</keyword>
<keyword id="KW-0028">Amino-acid biosynthesis</keyword>
<keyword id="KW-0055">Arginine biosynthesis</keyword>
<keyword id="KW-0068">Autocatalytic cleavage</keyword>
<keyword id="KW-0963">Cytoplasm</keyword>
<keyword id="KW-0808">Transferase</keyword>
<evidence type="ECO:0000255" key="1">
    <source>
        <dbReference type="HAMAP-Rule" id="MF_01106"/>
    </source>
</evidence>
<proteinExistence type="inferred from homology"/>
<name>ARGJ_METM7</name>
<dbReference type="EC" id="2.3.1.35" evidence="1"/>
<dbReference type="EMBL" id="CP000745">
    <property type="protein sequence ID" value="ABR65215.1"/>
    <property type="molecule type" value="Genomic_DNA"/>
</dbReference>
<dbReference type="SMR" id="A6VFI9"/>
<dbReference type="STRING" id="426368.MmarC7_0145"/>
<dbReference type="MEROPS" id="T05.002"/>
<dbReference type="KEGG" id="mmz:MmarC7_0145"/>
<dbReference type="eggNOG" id="arCOG04413">
    <property type="taxonomic scope" value="Archaea"/>
</dbReference>
<dbReference type="HOGENOM" id="CLU_027172_1_0_2"/>
<dbReference type="OrthoDB" id="52592at2157"/>
<dbReference type="UniPathway" id="UPA00068">
    <property type="reaction ID" value="UER00111"/>
</dbReference>
<dbReference type="GO" id="GO:0005737">
    <property type="term" value="C:cytoplasm"/>
    <property type="evidence" value="ECO:0007669"/>
    <property type="project" value="UniProtKB-SubCell"/>
</dbReference>
<dbReference type="GO" id="GO:0004358">
    <property type="term" value="F:glutamate N-acetyltransferase activity"/>
    <property type="evidence" value="ECO:0007669"/>
    <property type="project" value="UniProtKB-UniRule"/>
</dbReference>
<dbReference type="GO" id="GO:0004042">
    <property type="term" value="F:L-glutamate N-acetyltransferase activity"/>
    <property type="evidence" value="ECO:0007669"/>
    <property type="project" value="UniProtKB-UniRule"/>
</dbReference>
<dbReference type="GO" id="GO:0006526">
    <property type="term" value="P:L-arginine biosynthetic process"/>
    <property type="evidence" value="ECO:0007669"/>
    <property type="project" value="UniProtKB-UniRule"/>
</dbReference>
<dbReference type="GO" id="GO:0006592">
    <property type="term" value="P:ornithine biosynthetic process"/>
    <property type="evidence" value="ECO:0007669"/>
    <property type="project" value="TreeGrafter"/>
</dbReference>
<dbReference type="CDD" id="cd02152">
    <property type="entry name" value="OAT"/>
    <property type="match status" value="1"/>
</dbReference>
<dbReference type="Gene3D" id="3.30.2330.10">
    <property type="entry name" value="arginine biosynthesis bifunctional protein suprefamily"/>
    <property type="match status" value="1"/>
</dbReference>
<dbReference type="Gene3D" id="3.10.20.340">
    <property type="entry name" value="ArgJ beta chain, C-terminal domain"/>
    <property type="match status" value="1"/>
</dbReference>
<dbReference type="Gene3D" id="3.60.70.12">
    <property type="entry name" value="L-amino peptidase D-ALA esterase/amidase"/>
    <property type="match status" value="1"/>
</dbReference>
<dbReference type="HAMAP" id="MF_01106">
    <property type="entry name" value="ArgJ"/>
    <property type="match status" value="1"/>
</dbReference>
<dbReference type="InterPro" id="IPR002813">
    <property type="entry name" value="Arg_biosynth_ArgJ"/>
</dbReference>
<dbReference type="InterPro" id="IPR016117">
    <property type="entry name" value="ArgJ-like_dom_sf"/>
</dbReference>
<dbReference type="InterPro" id="IPR042195">
    <property type="entry name" value="ArgJ_beta_C"/>
</dbReference>
<dbReference type="NCBIfam" id="TIGR00120">
    <property type="entry name" value="ArgJ"/>
    <property type="match status" value="1"/>
</dbReference>
<dbReference type="NCBIfam" id="NF003802">
    <property type="entry name" value="PRK05388.1"/>
    <property type="match status" value="1"/>
</dbReference>
<dbReference type="PANTHER" id="PTHR23100">
    <property type="entry name" value="ARGININE BIOSYNTHESIS BIFUNCTIONAL PROTEIN ARGJ"/>
    <property type="match status" value="1"/>
</dbReference>
<dbReference type="PANTHER" id="PTHR23100:SF0">
    <property type="entry name" value="ARGININE BIOSYNTHESIS BIFUNCTIONAL PROTEIN ARGJ, MITOCHONDRIAL"/>
    <property type="match status" value="1"/>
</dbReference>
<dbReference type="Pfam" id="PF01960">
    <property type="entry name" value="ArgJ"/>
    <property type="match status" value="1"/>
</dbReference>
<dbReference type="SUPFAM" id="SSF56266">
    <property type="entry name" value="DmpA/ArgJ-like"/>
    <property type="match status" value="1"/>
</dbReference>
<gene>
    <name evidence="1" type="primary">argJ</name>
    <name type="ordered locus">MmarC7_0145</name>
</gene>
<reference key="1">
    <citation type="submission" date="2007-06" db="EMBL/GenBank/DDBJ databases">
        <title>Complete sequence of Methanococcus maripaludis C7.</title>
        <authorList>
            <consortium name="US DOE Joint Genome Institute"/>
            <person name="Copeland A."/>
            <person name="Lucas S."/>
            <person name="Lapidus A."/>
            <person name="Barry K."/>
            <person name="Glavina del Rio T."/>
            <person name="Dalin E."/>
            <person name="Tice H."/>
            <person name="Pitluck S."/>
            <person name="Clum A."/>
            <person name="Schmutz J."/>
            <person name="Larimer F."/>
            <person name="Land M."/>
            <person name="Hauser L."/>
            <person name="Kyrpides N."/>
            <person name="Anderson I."/>
            <person name="Sieprawska-Lupa M."/>
            <person name="Whitman W.B."/>
            <person name="Richardson P."/>
        </authorList>
    </citation>
    <scope>NUCLEOTIDE SEQUENCE [LARGE SCALE GENOMIC DNA]</scope>
    <source>
        <strain>C7 / ATCC BAA-1331</strain>
    </source>
</reference>